<reference key="1">
    <citation type="submission" date="2006-08" db="EMBL/GenBank/DDBJ databases">
        <title>Complete sequence of chromosome 2 of Burkholderia cenocepacia HI2424.</title>
        <authorList>
            <person name="Copeland A."/>
            <person name="Lucas S."/>
            <person name="Lapidus A."/>
            <person name="Barry K."/>
            <person name="Detter J.C."/>
            <person name="Glavina del Rio T."/>
            <person name="Hammon N."/>
            <person name="Israni S."/>
            <person name="Pitluck S."/>
            <person name="Chain P."/>
            <person name="Malfatti S."/>
            <person name="Shin M."/>
            <person name="Vergez L."/>
            <person name="Schmutz J."/>
            <person name="Larimer F."/>
            <person name="Land M."/>
            <person name="Hauser L."/>
            <person name="Kyrpides N."/>
            <person name="Kim E."/>
            <person name="LiPuma J.J."/>
            <person name="Gonzalez C.F."/>
            <person name="Konstantinidis K."/>
            <person name="Tiedje J.M."/>
            <person name="Richardson P."/>
        </authorList>
    </citation>
    <scope>NUCLEOTIDE SEQUENCE [LARGE SCALE GENOMIC DNA]</scope>
    <source>
        <strain>HI2424</strain>
    </source>
</reference>
<name>MDH_BURCH</name>
<proteinExistence type="inferred from homology"/>
<accession>A0AZ43</accession>
<dbReference type="EC" id="1.1.1.37" evidence="2"/>
<dbReference type="EMBL" id="CP000459">
    <property type="protein sequence ID" value="ABK10669.1"/>
    <property type="molecule type" value="Genomic_DNA"/>
</dbReference>
<dbReference type="RefSeq" id="WP_006479357.1">
    <property type="nucleotide sequence ID" value="NC_008543.1"/>
</dbReference>
<dbReference type="SMR" id="A0AZ43"/>
<dbReference type="KEGG" id="bch:Bcen2424_3932"/>
<dbReference type="HOGENOM" id="CLU_040727_2_0_4"/>
<dbReference type="GO" id="GO:0030060">
    <property type="term" value="F:L-malate dehydrogenase (NAD+) activity"/>
    <property type="evidence" value="ECO:0007669"/>
    <property type="project" value="UniProtKB-UniRule"/>
</dbReference>
<dbReference type="GO" id="GO:0006108">
    <property type="term" value="P:malate metabolic process"/>
    <property type="evidence" value="ECO:0007669"/>
    <property type="project" value="InterPro"/>
</dbReference>
<dbReference type="GO" id="GO:0006099">
    <property type="term" value="P:tricarboxylic acid cycle"/>
    <property type="evidence" value="ECO:0007669"/>
    <property type="project" value="UniProtKB-UniRule"/>
</dbReference>
<dbReference type="CDD" id="cd01338">
    <property type="entry name" value="MDH_chloroplast-like"/>
    <property type="match status" value="1"/>
</dbReference>
<dbReference type="FunFam" id="3.40.50.720:FF:000010">
    <property type="entry name" value="Malate dehydrogenase"/>
    <property type="match status" value="1"/>
</dbReference>
<dbReference type="FunFam" id="3.90.110.10:FF:000002">
    <property type="entry name" value="Malate dehydrogenase"/>
    <property type="match status" value="1"/>
</dbReference>
<dbReference type="Gene3D" id="3.90.110.10">
    <property type="entry name" value="Lactate dehydrogenase/glycoside hydrolase, family 4, C-terminal"/>
    <property type="match status" value="1"/>
</dbReference>
<dbReference type="Gene3D" id="3.40.50.720">
    <property type="entry name" value="NAD(P)-binding Rossmann-like Domain"/>
    <property type="match status" value="1"/>
</dbReference>
<dbReference type="HAMAP" id="MF_01517">
    <property type="entry name" value="Malate_dehydrog_2"/>
    <property type="match status" value="1"/>
</dbReference>
<dbReference type="InterPro" id="IPR001557">
    <property type="entry name" value="L-lactate/malate_DH"/>
</dbReference>
<dbReference type="InterPro" id="IPR022383">
    <property type="entry name" value="Lactate/malate_DH_C"/>
</dbReference>
<dbReference type="InterPro" id="IPR001236">
    <property type="entry name" value="Lactate/malate_DH_N"/>
</dbReference>
<dbReference type="InterPro" id="IPR015955">
    <property type="entry name" value="Lactate_DH/Glyco_Ohase_4_C"/>
</dbReference>
<dbReference type="InterPro" id="IPR010945">
    <property type="entry name" value="Malate_DH_type2"/>
</dbReference>
<dbReference type="InterPro" id="IPR036291">
    <property type="entry name" value="NAD(P)-bd_dom_sf"/>
</dbReference>
<dbReference type="NCBIfam" id="TIGR01759">
    <property type="entry name" value="MalateDH-SF1"/>
    <property type="match status" value="1"/>
</dbReference>
<dbReference type="NCBIfam" id="NF003916">
    <property type="entry name" value="PRK05442.1"/>
    <property type="match status" value="1"/>
</dbReference>
<dbReference type="PANTHER" id="PTHR23382">
    <property type="entry name" value="MALATE DEHYDROGENASE"/>
    <property type="match status" value="1"/>
</dbReference>
<dbReference type="Pfam" id="PF02866">
    <property type="entry name" value="Ldh_1_C"/>
    <property type="match status" value="1"/>
</dbReference>
<dbReference type="Pfam" id="PF00056">
    <property type="entry name" value="Ldh_1_N"/>
    <property type="match status" value="1"/>
</dbReference>
<dbReference type="PIRSF" id="PIRSF000102">
    <property type="entry name" value="Lac_mal_DH"/>
    <property type="match status" value="1"/>
</dbReference>
<dbReference type="SUPFAM" id="SSF56327">
    <property type="entry name" value="LDH C-terminal domain-like"/>
    <property type="match status" value="1"/>
</dbReference>
<dbReference type="SUPFAM" id="SSF51735">
    <property type="entry name" value="NAD(P)-binding Rossmann-fold domains"/>
    <property type="match status" value="1"/>
</dbReference>
<keyword id="KW-0520">NAD</keyword>
<keyword id="KW-0560">Oxidoreductase</keyword>
<keyword id="KW-0816">Tricarboxylic acid cycle</keyword>
<comment type="function">
    <text evidence="2">Catalyzes the reversible oxidation of malate to oxaloacetate.</text>
</comment>
<comment type="catalytic activity">
    <reaction evidence="2">
        <text>(S)-malate + NAD(+) = oxaloacetate + NADH + H(+)</text>
        <dbReference type="Rhea" id="RHEA:21432"/>
        <dbReference type="ChEBI" id="CHEBI:15378"/>
        <dbReference type="ChEBI" id="CHEBI:15589"/>
        <dbReference type="ChEBI" id="CHEBI:16452"/>
        <dbReference type="ChEBI" id="CHEBI:57540"/>
        <dbReference type="ChEBI" id="CHEBI:57945"/>
        <dbReference type="EC" id="1.1.1.37"/>
    </reaction>
</comment>
<comment type="similarity">
    <text evidence="2">Belongs to the LDH/MDH superfamily. MDH type 2 family.</text>
</comment>
<organism>
    <name type="scientific">Burkholderia cenocepacia (strain HI2424)</name>
    <dbReference type="NCBI Taxonomy" id="331272"/>
    <lineage>
        <taxon>Bacteria</taxon>
        <taxon>Pseudomonadati</taxon>
        <taxon>Pseudomonadota</taxon>
        <taxon>Betaproteobacteria</taxon>
        <taxon>Burkholderiales</taxon>
        <taxon>Burkholderiaceae</taxon>
        <taxon>Burkholderia</taxon>
        <taxon>Burkholderia cepacia complex</taxon>
    </lineage>
</organism>
<feature type="initiator methionine" description="Removed" evidence="1">
    <location>
        <position position="1"/>
    </location>
</feature>
<feature type="chain" id="PRO_0000294377" description="Malate dehydrogenase">
    <location>
        <begin position="2"/>
        <end position="328"/>
    </location>
</feature>
<feature type="active site" description="Proton acceptor" evidence="2">
    <location>
        <position position="188"/>
    </location>
</feature>
<feature type="binding site" evidence="2">
    <location>
        <begin position="12"/>
        <end position="18"/>
    </location>
    <ligand>
        <name>NAD(+)</name>
        <dbReference type="ChEBI" id="CHEBI:57540"/>
    </ligand>
</feature>
<feature type="binding site" evidence="2">
    <location>
        <position position="93"/>
    </location>
    <ligand>
        <name>substrate</name>
    </ligand>
</feature>
<feature type="binding site" evidence="2">
    <location>
        <position position="99"/>
    </location>
    <ligand>
        <name>substrate</name>
    </ligand>
</feature>
<feature type="binding site" evidence="2">
    <location>
        <position position="106"/>
    </location>
    <ligand>
        <name>NAD(+)</name>
        <dbReference type="ChEBI" id="CHEBI:57540"/>
    </ligand>
</feature>
<feature type="binding site" evidence="2">
    <location>
        <position position="113"/>
    </location>
    <ligand>
        <name>NAD(+)</name>
        <dbReference type="ChEBI" id="CHEBI:57540"/>
    </ligand>
</feature>
<feature type="binding site" evidence="2">
    <location>
        <begin position="130"/>
        <end position="132"/>
    </location>
    <ligand>
        <name>NAD(+)</name>
        <dbReference type="ChEBI" id="CHEBI:57540"/>
    </ligand>
</feature>
<feature type="binding site" evidence="2">
    <location>
        <position position="132"/>
    </location>
    <ligand>
        <name>substrate</name>
    </ligand>
</feature>
<feature type="binding site" evidence="2">
    <location>
        <position position="163"/>
    </location>
    <ligand>
        <name>substrate</name>
    </ligand>
</feature>
<sequence length="328" mass="35103">MAKPAKRVAVTGAAGQIAYSLLFRIANGDLLGKDQPVILQLLDLPQAQGAVKGVVMELDDCAFPLLAGVVITDDPKVAFKDADVALLVGARPRSKGMERKDLLSANAEIFTVQGAALNEVASRDVKVLVVGNPANTNAYIAMKSAPDLPKKNFTAMLRLDHNRALSQLAAKSGKPVASIEKLAVWGNHSPTMYPDFRFATAEGESLLKLINDDVWNRDTFIPTVGKRGAAIIEARGLSSAASAANAAIDHVRDWVLGTNGKWVTMGIPSDGSYGIPEDIIYGVPVTCENGEYKRVEGLEIDAFSREKMDGTLAELLEERDGVAHLLKN</sequence>
<evidence type="ECO:0000250" key="1"/>
<evidence type="ECO:0000255" key="2">
    <source>
        <dbReference type="HAMAP-Rule" id="MF_01517"/>
    </source>
</evidence>
<gene>
    <name evidence="2" type="primary">mdh</name>
    <name type="ordered locus">Bcen2424_3932</name>
</gene>
<protein>
    <recommendedName>
        <fullName evidence="2">Malate dehydrogenase</fullName>
        <ecNumber evidence="2">1.1.1.37</ecNumber>
    </recommendedName>
</protein>